<reference key="1">
    <citation type="journal article" date="2007" name="PLoS Genet.">
        <title>Meningococcal genetic variation mechanisms viewed through comparative analysis of serogroup C strain FAM18.</title>
        <authorList>
            <person name="Bentley S.D."/>
            <person name="Vernikos G.S."/>
            <person name="Snyder L.A.S."/>
            <person name="Churcher C."/>
            <person name="Arrowsmith C."/>
            <person name="Chillingworth T."/>
            <person name="Cronin A."/>
            <person name="Davis P.H."/>
            <person name="Holroyd N.E."/>
            <person name="Jagels K."/>
            <person name="Maddison M."/>
            <person name="Moule S."/>
            <person name="Rabbinowitsch E."/>
            <person name="Sharp S."/>
            <person name="Unwin L."/>
            <person name="Whitehead S."/>
            <person name="Quail M.A."/>
            <person name="Achtman M."/>
            <person name="Barrell B.G."/>
            <person name="Saunders N.J."/>
            <person name="Parkhill J."/>
        </authorList>
    </citation>
    <scope>NUCLEOTIDE SEQUENCE [LARGE SCALE GENOMIC DNA]</scope>
    <source>
        <strain>ATCC 700532 / DSM 15464 / FAM18</strain>
    </source>
</reference>
<protein>
    <recommendedName>
        <fullName evidence="1">Large ribosomal subunit protein bL33</fullName>
    </recommendedName>
    <alternativeName>
        <fullName evidence="3">50S ribosomal protein L33</fullName>
    </alternativeName>
</protein>
<evidence type="ECO:0000255" key="1">
    <source>
        <dbReference type="HAMAP-Rule" id="MF_00294"/>
    </source>
</evidence>
<evidence type="ECO:0000256" key="2">
    <source>
        <dbReference type="SAM" id="MobiDB-lite"/>
    </source>
</evidence>
<evidence type="ECO:0000305" key="3"/>
<comment type="similarity">
    <text evidence="1">Belongs to the bacterial ribosomal protein bL33 family.</text>
</comment>
<gene>
    <name evidence="1" type="primary">rpmG</name>
    <name type="ordered locus">NMC1850</name>
</gene>
<feature type="chain" id="PRO_0000356584" description="Large ribosomal subunit protein bL33">
    <location>
        <begin position="1"/>
        <end position="51"/>
    </location>
</feature>
<feature type="region of interest" description="Disordered" evidence="2">
    <location>
        <begin position="1"/>
        <end position="21"/>
    </location>
</feature>
<feature type="compositionally biased region" description="Polar residues" evidence="2">
    <location>
        <begin position="10"/>
        <end position="20"/>
    </location>
</feature>
<keyword id="KW-0687">Ribonucleoprotein</keyword>
<keyword id="KW-0689">Ribosomal protein</keyword>
<accession>A1KVW1</accession>
<name>RL33_NEIMF</name>
<proteinExistence type="inferred from homology"/>
<dbReference type="EMBL" id="AM421808">
    <property type="protein sequence ID" value="CAM11016.1"/>
    <property type="molecule type" value="Genomic_DNA"/>
</dbReference>
<dbReference type="RefSeq" id="WP_002212306.1">
    <property type="nucleotide sequence ID" value="NC_008767.1"/>
</dbReference>
<dbReference type="SMR" id="A1KVW1"/>
<dbReference type="GeneID" id="93387413"/>
<dbReference type="KEGG" id="nmc:NMC1850"/>
<dbReference type="HOGENOM" id="CLU_190949_1_1_4"/>
<dbReference type="Proteomes" id="UP000002286">
    <property type="component" value="Chromosome"/>
</dbReference>
<dbReference type="GO" id="GO:0022625">
    <property type="term" value="C:cytosolic large ribosomal subunit"/>
    <property type="evidence" value="ECO:0007669"/>
    <property type="project" value="TreeGrafter"/>
</dbReference>
<dbReference type="GO" id="GO:0003735">
    <property type="term" value="F:structural constituent of ribosome"/>
    <property type="evidence" value="ECO:0007669"/>
    <property type="project" value="InterPro"/>
</dbReference>
<dbReference type="GO" id="GO:0006412">
    <property type="term" value="P:translation"/>
    <property type="evidence" value="ECO:0007669"/>
    <property type="project" value="UniProtKB-UniRule"/>
</dbReference>
<dbReference type="FunFam" id="2.20.28.120:FF:000001">
    <property type="entry name" value="50S ribosomal protein L33"/>
    <property type="match status" value="1"/>
</dbReference>
<dbReference type="Gene3D" id="2.20.28.120">
    <property type="entry name" value="Ribosomal protein L33"/>
    <property type="match status" value="1"/>
</dbReference>
<dbReference type="HAMAP" id="MF_00294">
    <property type="entry name" value="Ribosomal_bL33"/>
    <property type="match status" value="1"/>
</dbReference>
<dbReference type="InterPro" id="IPR001705">
    <property type="entry name" value="Ribosomal_bL33"/>
</dbReference>
<dbReference type="InterPro" id="IPR018264">
    <property type="entry name" value="Ribosomal_bL33_CS"/>
</dbReference>
<dbReference type="InterPro" id="IPR038584">
    <property type="entry name" value="Ribosomal_bL33_sf"/>
</dbReference>
<dbReference type="InterPro" id="IPR011332">
    <property type="entry name" value="Ribosomal_zn-bd"/>
</dbReference>
<dbReference type="NCBIfam" id="NF001764">
    <property type="entry name" value="PRK00504.1"/>
    <property type="match status" value="1"/>
</dbReference>
<dbReference type="NCBIfam" id="NF001860">
    <property type="entry name" value="PRK00595.1"/>
    <property type="match status" value="1"/>
</dbReference>
<dbReference type="NCBIfam" id="TIGR01023">
    <property type="entry name" value="rpmG_bact"/>
    <property type="match status" value="1"/>
</dbReference>
<dbReference type="PANTHER" id="PTHR15238">
    <property type="entry name" value="54S RIBOSOMAL PROTEIN L39, MITOCHONDRIAL"/>
    <property type="match status" value="1"/>
</dbReference>
<dbReference type="PANTHER" id="PTHR15238:SF1">
    <property type="entry name" value="LARGE RIBOSOMAL SUBUNIT PROTEIN BL33M"/>
    <property type="match status" value="1"/>
</dbReference>
<dbReference type="Pfam" id="PF00471">
    <property type="entry name" value="Ribosomal_L33"/>
    <property type="match status" value="1"/>
</dbReference>
<dbReference type="SUPFAM" id="SSF57829">
    <property type="entry name" value="Zn-binding ribosomal proteins"/>
    <property type="match status" value="1"/>
</dbReference>
<dbReference type="PROSITE" id="PS00582">
    <property type="entry name" value="RIBOSOMAL_L33"/>
    <property type="match status" value="1"/>
</dbReference>
<sequence length="51" mass="5937">MRDKIKLESSAGTGHFYTTTKNKRTMPGKLEIKKFDPVARKHVVYKETKLK</sequence>
<organism>
    <name type="scientific">Neisseria meningitidis serogroup C / serotype 2a (strain ATCC 700532 / DSM 15464 / FAM18)</name>
    <dbReference type="NCBI Taxonomy" id="272831"/>
    <lineage>
        <taxon>Bacteria</taxon>
        <taxon>Pseudomonadati</taxon>
        <taxon>Pseudomonadota</taxon>
        <taxon>Betaproteobacteria</taxon>
        <taxon>Neisseriales</taxon>
        <taxon>Neisseriaceae</taxon>
        <taxon>Neisseria</taxon>
    </lineage>
</organism>